<protein>
    <recommendedName>
        <fullName>WAT1-related protein At4g30420</fullName>
    </recommendedName>
</protein>
<sequence>MAMTMIQLCYAGVTLFARATLVHGLSPRVFILYRQAFATIFIFPFLYLSRRKSKIAISSLDLKSFSLIFLVSLIGITINQNLYLEGLYLTSSSMGSAVGNIIPAITFLISFLAGYEKLNLRDIRGLAKIAGTILCVAGAISMTLLRGPKILNSESALPIAKSVLGHLKDQNTWLIGCLFLFSSTLCWSFWLILQVPISAYYPDNLSLSAWMCLFGTIQCAVVTFFLEKDPNAWILHSYSEFATCLYAGIGASALSFTVQAWAIAKRGPVFSALFNPLCTVIVTILAALFFHEEIYTGSLIGGLGVILGLYTVLWGKAKDVMMNQDQRDNDQKSEVKIHIEDSSNTTICNKDLKNPLLSKHKSTEEIQTHQQLY</sequence>
<keyword id="KW-0472">Membrane</keyword>
<keyword id="KW-1185">Reference proteome</keyword>
<keyword id="KW-0677">Repeat</keyword>
<keyword id="KW-0812">Transmembrane</keyword>
<keyword id="KW-1133">Transmembrane helix</keyword>
<accession>Q9M0B8</accession>
<organism>
    <name type="scientific">Arabidopsis thaliana</name>
    <name type="common">Mouse-ear cress</name>
    <dbReference type="NCBI Taxonomy" id="3702"/>
    <lineage>
        <taxon>Eukaryota</taxon>
        <taxon>Viridiplantae</taxon>
        <taxon>Streptophyta</taxon>
        <taxon>Embryophyta</taxon>
        <taxon>Tracheophyta</taxon>
        <taxon>Spermatophyta</taxon>
        <taxon>Magnoliopsida</taxon>
        <taxon>eudicotyledons</taxon>
        <taxon>Gunneridae</taxon>
        <taxon>Pentapetalae</taxon>
        <taxon>rosids</taxon>
        <taxon>malvids</taxon>
        <taxon>Brassicales</taxon>
        <taxon>Brassicaceae</taxon>
        <taxon>Camelineae</taxon>
        <taxon>Arabidopsis</taxon>
    </lineage>
</organism>
<reference key="1">
    <citation type="journal article" date="1999" name="Nature">
        <title>Sequence and analysis of chromosome 4 of the plant Arabidopsis thaliana.</title>
        <authorList>
            <person name="Mayer K.F.X."/>
            <person name="Schueller C."/>
            <person name="Wambutt R."/>
            <person name="Murphy G."/>
            <person name="Volckaert G."/>
            <person name="Pohl T."/>
            <person name="Duesterhoeft A."/>
            <person name="Stiekema W."/>
            <person name="Entian K.-D."/>
            <person name="Terryn N."/>
            <person name="Harris B."/>
            <person name="Ansorge W."/>
            <person name="Brandt P."/>
            <person name="Grivell L.A."/>
            <person name="Rieger M."/>
            <person name="Weichselgartner M."/>
            <person name="de Simone V."/>
            <person name="Obermaier B."/>
            <person name="Mache R."/>
            <person name="Mueller M."/>
            <person name="Kreis M."/>
            <person name="Delseny M."/>
            <person name="Puigdomenech P."/>
            <person name="Watson M."/>
            <person name="Schmidtheini T."/>
            <person name="Reichert B."/>
            <person name="Portetelle D."/>
            <person name="Perez-Alonso M."/>
            <person name="Boutry M."/>
            <person name="Bancroft I."/>
            <person name="Vos P."/>
            <person name="Hoheisel J."/>
            <person name="Zimmermann W."/>
            <person name="Wedler H."/>
            <person name="Ridley P."/>
            <person name="Langham S.-A."/>
            <person name="McCullagh B."/>
            <person name="Bilham L."/>
            <person name="Robben J."/>
            <person name="van der Schueren J."/>
            <person name="Grymonprez B."/>
            <person name="Chuang Y.-J."/>
            <person name="Vandenbussche F."/>
            <person name="Braeken M."/>
            <person name="Weltjens I."/>
            <person name="Voet M."/>
            <person name="Bastiaens I."/>
            <person name="Aert R."/>
            <person name="Defoor E."/>
            <person name="Weitzenegger T."/>
            <person name="Bothe G."/>
            <person name="Ramsperger U."/>
            <person name="Hilbert H."/>
            <person name="Braun M."/>
            <person name="Holzer E."/>
            <person name="Brandt A."/>
            <person name="Peters S."/>
            <person name="van Staveren M."/>
            <person name="Dirkse W."/>
            <person name="Mooijman P."/>
            <person name="Klein Lankhorst R."/>
            <person name="Rose M."/>
            <person name="Hauf J."/>
            <person name="Koetter P."/>
            <person name="Berneiser S."/>
            <person name="Hempel S."/>
            <person name="Feldpausch M."/>
            <person name="Lamberth S."/>
            <person name="Van den Daele H."/>
            <person name="De Keyser A."/>
            <person name="Buysshaert C."/>
            <person name="Gielen J."/>
            <person name="Villarroel R."/>
            <person name="De Clercq R."/>
            <person name="van Montagu M."/>
            <person name="Rogers J."/>
            <person name="Cronin A."/>
            <person name="Quail M.A."/>
            <person name="Bray-Allen S."/>
            <person name="Clark L."/>
            <person name="Doggett J."/>
            <person name="Hall S."/>
            <person name="Kay M."/>
            <person name="Lennard N."/>
            <person name="McLay K."/>
            <person name="Mayes R."/>
            <person name="Pettett A."/>
            <person name="Rajandream M.A."/>
            <person name="Lyne M."/>
            <person name="Benes V."/>
            <person name="Rechmann S."/>
            <person name="Borkova D."/>
            <person name="Bloecker H."/>
            <person name="Scharfe M."/>
            <person name="Grimm M."/>
            <person name="Loehnert T.-H."/>
            <person name="Dose S."/>
            <person name="de Haan M."/>
            <person name="Maarse A.C."/>
            <person name="Schaefer M."/>
            <person name="Mueller-Auer S."/>
            <person name="Gabel C."/>
            <person name="Fuchs M."/>
            <person name="Fartmann B."/>
            <person name="Granderath K."/>
            <person name="Dauner D."/>
            <person name="Herzl A."/>
            <person name="Neumann S."/>
            <person name="Argiriou A."/>
            <person name="Vitale D."/>
            <person name="Liguori R."/>
            <person name="Piravandi E."/>
            <person name="Massenet O."/>
            <person name="Quigley F."/>
            <person name="Clabauld G."/>
            <person name="Muendlein A."/>
            <person name="Felber R."/>
            <person name="Schnabl S."/>
            <person name="Hiller R."/>
            <person name="Schmidt W."/>
            <person name="Lecharny A."/>
            <person name="Aubourg S."/>
            <person name="Chefdor F."/>
            <person name="Cooke R."/>
            <person name="Berger C."/>
            <person name="Monfort A."/>
            <person name="Casacuberta E."/>
            <person name="Gibbons T."/>
            <person name="Weber N."/>
            <person name="Vandenbol M."/>
            <person name="Bargues M."/>
            <person name="Terol J."/>
            <person name="Torres A."/>
            <person name="Perez-Perez A."/>
            <person name="Purnelle B."/>
            <person name="Bent E."/>
            <person name="Johnson S."/>
            <person name="Tacon D."/>
            <person name="Jesse T."/>
            <person name="Heijnen L."/>
            <person name="Schwarz S."/>
            <person name="Scholler P."/>
            <person name="Heber S."/>
            <person name="Francs P."/>
            <person name="Bielke C."/>
            <person name="Frishman D."/>
            <person name="Haase D."/>
            <person name="Lemcke K."/>
            <person name="Mewes H.-W."/>
            <person name="Stocker S."/>
            <person name="Zaccaria P."/>
            <person name="Bevan M."/>
            <person name="Wilson R.K."/>
            <person name="de la Bastide M."/>
            <person name="Habermann K."/>
            <person name="Parnell L."/>
            <person name="Dedhia N."/>
            <person name="Gnoj L."/>
            <person name="Schutz K."/>
            <person name="Huang E."/>
            <person name="Spiegel L."/>
            <person name="Sekhon M."/>
            <person name="Murray J."/>
            <person name="Sheet P."/>
            <person name="Cordes M."/>
            <person name="Abu-Threideh J."/>
            <person name="Stoneking T."/>
            <person name="Kalicki J."/>
            <person name="Graves T."/>
            <person name="Harmon G."/>
            <person name="Edwards J."/>
            <person name="Latreille P."/>
            <person name="Courtney L."/>
            <person name="Cloud J."/>
            <person name="Abbott A."/>
            <person name="Scott K."/>
            <person name="Johnson D."/>
            <person name="Minx P."/>
            <person name="Bentley D."/>
            <person name="Fulton B."/>
            <person name="Miller N."/>
            <person name="Greco T."/>
            <person name="Kemp K."/>
            <person name="Kramer J."/>
            <person name="Fulton L."/>
            <person name="Mardis E."/>
            <person name="Dante M."/>
            <person name="Pepin K."/>
            <person name="Hillier L.W."/>
            <person name="Nelson J."/>
            <person name="Spieth J."/>
            <person name="Ryan E."/>
            <person name="Andrews S."/>
            <person name="Geisel C."/>
            <person name="Layman D."/>
            <person name="Du H."/>
            <person name="Ali J."/>
            <person name="Berghoff A."/>
            <person name="Jones K."/>
            <person name="Drone K."/>
            <person name="Cotton M."/>
            <person name="Joshu C."/>
            <person name="Antonoiu B."/>
            <person name="Zidanic M."/>
            <person name="Strong C."/>
            <person name="Sun H."/>
            <person name="Lamar B."/>
            <person name="Yordan C."/>
            <person name="Ma P."/>
            <person name="Zhong J."/>
            <person name="Preston R."/>
            <person name="Vil D."/>
            <person name="Shekher M."/>
            <person name="Matero A."/>
            <person name="Shah R."/>
            <person name="Swaby I.K."/>
            <person name="O'Shaughnessy A."/>
            <person name="Rodriguez M."/>
            <person name="Hoffman J."/>
            <person name="Till S."/>
            <person name="Granat S."/>
            <person name="Shohdy N."/>
            <person name="Hasegawa A."/>
            <person name="Hameed A."/>
            <person name="Lodhi M."/>
            <person name="Johnson A."/>
            <person name="Chen E."/>
            <person name="Marra M.A."/>
            <person name="Martienssen R."/>
            <person name="McCombie W.R."/>
        </authorList>
    </citation>
    <scope>NUCLEOTIDE SEQUENCE [LARGE SCALE GENOMIC DNA]</scope>
    <source>
        <strain>cv. Columbia</strain>
    </source>
</reference>
<reference key="2">
    <citation type="journal article" date="2017" name="Plant J.">
        <title>Araport11: a complete reannotation of the Arabidopsis thaliana reference genome.</title>
        <authorList>
            <person name="Cheng C.Y."/>
            <person name="Krishnakumar V."/>
            <person name="Chan A.P."/>
            <person name="Thibaud-Nissen F."/>
            <person name="Schobel S."/>
            <person name="Town C.D."/>
        </authorList>
    </citation>
    <scope>GENOME REANNOTATION</scope>
    <source>
        <strain>cv. Columbia</strain>
    </source>
</reference>
<dbReference type="EMBL" id="AL161577">
    <property type="protein sequence ID" value="CAB79760.1"/>
    <property type="molecule type" value="Genomic_DNA"/>
</dbReference>
<dbReference type="EMBL" id="CP002687">
    <property type="protein sequence ID" value="AEE85763.1"/>
    <property type="molecule type" value="Genomic_DNA"/>
</dbReference>
<dbReference type="PIR" id="G85355">
    <property type="entry name" value="G85355"/>
</dbReference>
<dbReference type="RefSeq" id="NP_194771.1">
    <property type="nucleotide sequence ID" value="NM_119188.1"/>
</dbReference>
<dbReference type="SMR" id="Q9M0B8"/>
<dbReference type="STRING" id="3702.Q9M0B8"/>
<dbReference type="PaxDb" id="3702-AT4G30420.1"/>
<dbReference type="EnsemblPlants" id="AT4G30420.1">
    <property type="protein sequence ID" value="AT4G30420.1"/>
    <property type="gene ID" value="AT4G30420"/>
</dbReference>
<dbReference type="GeneID" id="829165"/>
<dbReference type="Gramene" id="AT4G30420.1">
    <property type="protein sequence ID" value="AT4G30420.1"/>
    <property type="gene ID" value="AT4G30420"/>
</dbReference>
<dbReference type="KEGG" id="ath:AT4G30420"/>
<dbReference type="Araport" id="AT4G30420"/>
<dbReference type="TAIR" id="AT4G30420">
    <property type="gene designation" value="UMAMIT34"/>
</dbReference>
<dbReference type="eggNOG" id="ENOG502QPWM">
    <property type="taxonomic scope" value="Eukaryota"/>
</dbReference>
<dbReference type="HOGENOM" id="CLU_025359_1_1_1"/>
<dbReference type="InParanoid" id="Q9M0B8"/>
<dbReference type="OrthoDB" id="1728340at2759"/>
<dbReference type="PhylomeDB" id="Q9M0B8"/>
<dbReference type="PRO" id="PR:Q9M0B8"/>
<dbReference type="Proteomes" id="UP000006548">
    <property type="component" value="Chromosome 4"/>
</dbReference>
<dbReference type="ExpressionAtlas" id="Q9M0B8">
    <property type="expression patterns" value="baseline and differential"/>
</dbReference>
<dbReference type="GO" id="GO:0016020">
    <property type="term" value="C:membrane"/>
    <property type="evidence" value="ECO:0007669"/>
    <property type="project" value="UniProtKB-SubCell"/>
</dbReference>
<dbReference type="GO" id="GO:0022857">
    <property type="term" value="F:transmembrane transporter activity"/>
    <property type="evidence" value="ECO:0007669"/>
    <property type="project" value="InterPro"/>
</dbReference>
<dbReference type="InterPro" id="IPR000620">
    <property type="entry name" value="EamA_dom"/>
</dbReference>
<dbReference type="InterPro" id="IPR030184">
    <property type="entry name" value="WAT1-related"/>
</dbReference>
<dbReference type="PANTHER" id="PTHR31218">
    <property type="entry name" value="WAT1-RELATED PROTEIN"/>
    <property type="match status" value="1"/>
</dbReference>
<dbReference type="Pfam" id="PF00892">
    <property type="entry name" value="EamA"/>
    <property type="match status" value="2"/>
</dbReference>
<dbReference type="SUPFAM" id="SSF103481">
    <property type="entry name" value="Multidrug resistance efflux transporter EmrE"/>
    <property type="match status" value="2"/>
</dbReference>
<feature type="chain" id="PRO_0000421344" description="WAT1-related protein At4g30420">
    <location>
        <begin position="1"/>
        <end position="373"/>
    </location>
</feature>
<feature type="transmembrane region" description="Helical" evidence="2">
    <location>
        <begin position="2"/>
        <end position="22"/>
    </location>
</feature>
<feature type="transmembrane region" description="Helical" evidence="2">
    <location>
        <begin position="29"/>
        <end position="49"/>
    </location>
</feature>
<feature type="transmembrane region" description="Helical" evidence="2">
    <location>
        <begin position="55"/>
        <end position="75"/>
    </location>
</feature>
<feature type="transmembrane region" description="Helical" evidence="2">
    <location>
        <begin position="94"/>
        <end position="114"/>
    </location>
</feature>
<feature type="transmembrane region" description="Helical" evidence="2">
    <location>
        <begin position="125"/>
        <end position="145"/>
    </location>
</feature>
<feature type="transmembrane region" description="Helical" evidence="2">
    <location>
        <begin position="173"/>
        <end position="193"/>
    </location>
</feature>
<feature type="transmembrane region" description="Helical" evidence="2">
    <location>
        <begin position="205"/>
        <end position="225"/>
    </location>
</feature>
<feature type="transmembrane region" description="Helical" evidence="2">
    <location>
        <begin position="244"/>
        <end position="264"/>
    </location>
</feature>
<feature type="transmembrane region" description="Helical" evidence="2">
    <location>
        <begin position="270"/>
        <end position="290"/>
    </location>
</feature>
<feature type="transmembrane region" description="Helical" evidence="2">
    <location>
        <begin position="294"/>
        <end position="314"/>
    </location>
</feature>
<feature type="domain" description="EamA 1">
    <location>
        <begin position="9"/>
        <end position="135"/>
    </location>
</feature>
<feature type="domain" description="EamA 2">
    <location>
        <begin position="186"/>
        <end position="313"/>
    </location>
</feature>
<gene>
    <name type="ordered locus">At4g30420</name>
    <name type="ORF">F17I23.240</name>
</gene>
<proteinExistence type="inferred from homology"/>
<name>WTR37_ARATH</name>
<evidence type="ECO:0000250" key="1"/>
<evidence type="ECO:0000255" key="2"/>
<evidence type="ECO:0000305" key="3"/>
<comment type="subcellular location">
    <subcellularLocation>
        <location evidence="1">Membrane</location>
        <topology evidence="3">Multi-pass membrane protein</topology>
    </subcellularLocation>
</comment>
<comment type="similarity">
    <text evidence="3">Belongs to the drug/metabolite transporter (DMT) superfamily. Plant drug/metabolite exporter (P-DME) (TC 2.A.7.4) family.</text>
</comment>